<sequence length="372" mass="41806">MWPFAPVPAGAKCRLVETLPENMDFRSDHLTTFECFNEIITLAKKYIYIASFCCNPLSTTRGALIFDKLKEASEKGIKIIVLLDERGKRNLGELQSHCPDINFITVNIDKKNNVGLLLGCFWVSDDERCYVGNASFTGGSIHTIKTLGVYSDYPPLATDLRRRFDTFKAFNSAKNSWLNLCSAACCLPVSTAYHIKNPIGGVFFTDSPEHLLGYSRDLDTDVVIDKLKSAKTSIDIEHLAIVPTTRVDGNSYYWPDIYNSIIEAAINRGVKIRLLVGNWDKNDVYSMATARSLDALCVQNDLSVKVFTIQNNTKLLIVDDEYVHITSANFDGTHYQNHGFVSFNSIDKQLVSEAKKIFERDWVSSHSKSLKI</sequence>
<dbReference type="EC" id="3.1.1.-" evidence="1"/>
<dbReference type="EC" id="3.1.4.4" evidence="1"/>
<dbReference type="EMBL" id="M60412">
    <property type="protein sequence ID" value="AAA48236.1"/>
    <property type="molecule type" value="Genomic_DNA"/>
</dbReference>
<dbReference type="EMBL" id="M60413">
    <property type="protein sequence ID" value="AAA48237.1"/>
    <property type="molecule type" value="Genomic_DNA"/>
</dbReference>
<dbReference type="PIR" id="A40339">
    <property type="entry name" value="WMVZID"/>
</dbReference>
<dbReference type="SMR" id="P26653"/>
<dbReference type="GO" id="GO:0044167">
    <property type="term" value="C:host cell endoplasmic reticulum membrane"/>
    <property type="evidence" value="ECO:0000250"/>
    <property type="project" value="UniProtKB"/>
</dbReference>
<dbReference type="GO" id="GO:0044177">
    <property type="term" value="C:host cell Golgi apparatus"/>
    <property type="evidence" value="ECO:0007669"/>
    <property type="project" value="UniProtKB-SubCell"/>
</dbReference>
<dbReference type="GO" id="GO:0016020">
    <property type="term" value="C:membrane"/>
    <property type="evidence" value="ECO:0007669"/>
    <property type="project" value="UniProtKB-KW"/>
</dbReference>
<dbReference type="GO" id="GO:0019031">
    <property type="term" value="C:viral envelope"/>
    <property type="evidence" value="ECO:0007669"/>
    <property type="project" value="UniProtKB-KW"/>
</dbReference>
<dbReference type="GO" id="GO:0036338">
    <property type="term" value="C:viral membrane"/>
    <property type="evidence" value="ECO:0000250"/>
    <property type="project" value="UniProtKB"/>
</dbReference>
<dbReference type="GO" id="GO:0055036">
    <property type="term" value="C:virion membrane"/>
    <property type="evidence" value="ECO:0007669"/>
    <property type="project" value="UniProtKB-SubCell"/>
</dbReference>
<dbReference type="GO" id="GO:0004630">
    <property type="term" value="F:phospholipase D activity"/>
    <property type="evidence" value="ECO:0007669"/>
    <property type="project" value="RHEA"/>
</dbReference>
<dbReference type="GO" id="GO:0039702">
    <property type="term" value="P:viral budding via host ESCRT complex"/>
    <property type="evidence" value="ECO:0007669"/>
    <property type="project" value="UniProtKB-KW"/>
</dbReference>
<dbReference type="CDD" id="cd09106">
    <property type="entry name" value="PLDc_vPLD3_4_5_like_1"/>
    <property type="match status" value="1"/>
</dbReference>
<dbReference type="CDD" id="cd09107">
    <property type="entry name" value="PLDc_vPLD3_4_5_like_2"/>
    <property type="match status" value="1"/>
</dbReference>
<dbReference type="FunFam" id="3.30.870.10:FF:000040">
    <property type="entry name" value="Envelope phospholipase F13"/>
    <property type="match status" value="1"/>
</dbReference>
<dbReference type="FunFam" id="3.30.870.10:FF:000041">
    <property type="entry name" value="Envelope phospholipase F13"/>
    <property type="match status" value="1"/>
</dbReference>
<dbReference type="Gene3D" id="3.30.870.10">
    <property type="entry name" value="Endonuclease Chain A"/>
    <property type="match status" value="2"/>
</dbReference>
<dbReference type="InterPro" id="IPR050874">
    <property type="entry name" value="Diverse_PLD-related"/>
</dbReference>
<dbReference type="InterPro" id="IPR032803">
    <property type="entry name" value="PLDc_3"/>
</dbReference>
<dbReference type="InterPro" id="IPR001736">
    <property type="entry name" value="PLipase_D/transphosphatidylase"/>
</dbReference>
<dbReference type="PANTHER" id="PTHR10185:SF17">
    <property type="entry name" value="GM01519P-RELATED"/>
    <property type="match status" value="1"/>
</dbReference>
<dbReference type="PANTHER" id="PTHR10185">
    <property type="entry name" value="PHOSPHOLIPASE D - RELATED"/>
    <property type="match status" value="1"/>
</dbReference>
<dbReference type="Pfam" id="PF13918">
    <property type="entry name" value="PLDc_3"/>
    <property type="match status" value="1"/>
</dbReference>
<dbReference type="SMART" id="SM00155">
    <property type="entry name" value="PLDc"/>
    <property type="match status" value="2"/>
</dbReference>
<dbReference type="SUPFAM" id="SSF56024">
    <property type="entry name" value="Phospholipase D/nuclease"/>
    <property type="match status" value="2"/>
</dbReference>
<dbReference type="PROSITE" id="PS50035">
    <property type="entry name" value="PLD"/>
    <property type="match status" value="1"/>
</dbReference>
<reference key="1">
    <citation type="journal article" date="1991" name="J. Virol.">
        <title>A mutation in the gene encoding the vaccinia virus 37,000-M(r) protein confers resistance to an inhibitor of virus envelopment and release.</title>
        <authorList>
            <person name="Schmutz C."/>
            <person name="Payne L.G."/>
            <person name="Gubser J."/>
            <person name="Wittek R."/>
        </authorList>
    </citation>
    <scope>NUCLEOTIDE SEQUENCE [GENOMIC DNA]</scope>
    <scope>MUTAGENESIS OF ASP-280</scope>
</reference>
<protein>
    <recommendedName>
        <fullName>Envelope phospholipase OPG057</fullName>
        <ecNumber evidence="1">3.1.1.-</ecNumber>
        <ecNumber evidence="1">3.1.4.4</ecNumber>
    </recommendedName>
    <alternativeName>
        <fullName>37 kDa protein</fullName>
    </alternativeName>
    <alternativeName>
        <fullName>Envelope phospholipase F13</fullName>
    </alternativeName>
    <alternativeName>
        <fullName>Envelope protein F13</fullName>
    </alternativeName>
    <alternativeName>
        <fullName>Palmitoylated EV membrane protein</fullName>
    </alternativeName>
    <alternativeName>
        <fullName>p37K</fullName>
    </alternativeName>
</protein>
<name>PG057_VACCI</name>
<organismHost>
    <name type="scientific">Homo sapiens</name>
    <name type="common">Human</name>
    <dbReference type="NCBI Taxonomy" id="9606"/>
</organismHost>
<feature type="chain" id="PRO_0000099196" description="Envelope phospholipase OPG057">
    <location>
        <begin position="1"/>
        <end position="372"/>
    </location>
</feature>
<feature type="domain" description="PLD phosphodiesterase" evidence="2">
    <location>
        <begin position="307"/>
        <end position="334"/>
    </location>
</feature>
<feature type="short sequence motif" description="YPPL">
    <location>
        <begin position="153"/>
        <end position="156"/>
    </location>
</feature>
<feature type="lipid moiety-binding region" description="S-palmitoyl cysteine; by host" evidence="1">
    <location>
        <position position="185"/>
    </location>
</feature>
<feature type="lipid moiety-binding region" description="S-palmitoyl cysteine; by host" evidence="1">
    <location>
        <position position="186"/>
    </location>
</feature>
<feature type="mutagenesis site" description="Resistance to IMCBH." evidence="3">
    <original>D</original>
    <variation>Y</variation>
    <location>
        <position position="280"/>
    </location>
</feature>
<evidence type="ECO:0000250" key="1">
    <source>
        <dbReference type="UniProtKB" id="P04021"/>
    </source>
</evidence>
<evidence type="ECO:0000255" key="2">
    <source>
        <dbReference type="PROSITE-ProRule" id="PRU00153"/>
    </source>
</evidence>
<evidence type="ECO:0000269" key="3">
    <source>
    </source>
</evidence>
<evidence type="ECO:0000305" key="4"/>
<organism>
    <name type="scientific">Vaccinia virus (strain IHD-J)</name>
    <name type="common">VACV</name>
    <dbReference type="NCBI Taxonomy" id="10251"/>
    <lineage>
        <taxon>Viruses</taxon>
        <taxon>Varidnaviria</taxon>
        <taxon>Bamfordvirae</taxon>
        <taxon>Nucleocytoviricota</taxon>
        <taxon>Pokkesviricetes</taxon>
        <taxon>Chitovirales</taxon>
        <taxon>Poxviridae</taxon>
        <taxon>Chordopoxvirinae</taxon>
        <taxon>Orthopoxvirus</taxon>
        <taxon>Vaccinia virus</taxon>
    </lineage>
</organism>
<keyword id="KW-1038">Host endoplasmic reticulum</keyword>
<keyword id="KW-1040">Host Golgi apparatus</keyword>
<keyword id="KW-1043">Host membrane</keyword>
<keyword id="KW-0945">Host-virus interaction</keyword>
<keyword id="KW-0378">Hydrolase</keyword>
<keyword id="KW-0426">Late protein</keyword>
<keyword id="KW-0449">Lipoprotein</keyword>
<keyword id="KW-0472">Membrane</keyword>
<keyword id="KW-0564">Palmitate</keyword>
<keyword id="KW-1198">Viral budding</keyword>
<keyword id="KW-1187">Viral budding via the host ESCRT complexes</keyword>
<keyword id="KW-0261">Viral envelope protein</keyword>
<keyword id="KW-1188">Viral release from host cell</keyword>
<keyword id="KW-0946">Virion</keyword>
<accession>P26653</accession>
<proteinExistence type="evidence at protein level"/>
<comment type="function">
    <text evidence="1">Major envelope protein that plays a role in the biogenesis of the viral double membrane and in egress of virus from the host cell. Produces the wrapped form of virus that is required for cell-to-cell spread. Acts as a lipase with broad specificity including phospholipase C, phospholipase A, and triacylglycerol lipase activities.</text>
</comment>
<comment type="catalytic activity">
    <reaction evidence="1">
        <text>a 1,2-diacyl-sn-glycero-3-phosphocholine + H2O = a 1,2-diacyl-sn-glycero-3-phosphate + choline + H(+)</text>
        <dbReference type="Rhea" id="RHEA:14445"/>
        <dbReference type="ChEBI" id="CHEBI:15354"/>
        <dbReference type="ChEBI" id="CHEBI:15377"/>
        <dbReference type="ChEBI" id="CHEBI:15378"/>
        <dbReference type="ChEBI" id="CHEBI:57643"/>
        <dbReference type="ChEBI" id="CHEBI:58608"/>
        <dbReference type="EC" id="3.1.4.4"/>
    </reaction>
    <physiologicalReaction direction="left-to-right" evidence="1">
        <dbReference type="Rhea" id="RHEA:14446"/>
    </physiologicalReaction>
</comment>
<comment type="subunit">
    <text evidence="1">Interacts with protein OPG190.</text>
</comment>
<comment type="subcellular location">
    <subcellularLocation>
        <location evidence="1">Virion membrane</location>
        <topology evidence="1">Lipid-anchor</topology>
    </subcellularLocation>
    <subcellularLocation>
        <location evidence="1">Host Golgi apparatus</location>
        <location evidence="1">Host trans-Golgi network</location>
    </subcellularLocation>
    <subcellularLocation>
        <location evidence="1">Host endoplasmic reticulum membrane</location>
        <topology evidence="1">Lipid-anchor</topology>
        <orientation evidence="1">Cytoplasmic side</orientation>
    </subcellularLocation>
    <text evidence="1">Component of the inner side of the enveloped virion (EV) membrane. F13 is associated post-translationally with membranes.</text>
</comment>
<comment type="induction">
    <text evidence="1">Expressed in the intermediate phase of the viral replicative cycle.</text>
</comment>
<comment type="domain">
    <text evidence="1">Late-budding domains (L domains) are short sequence motifs essential for viral particle budding. They recruit proteins of the host ESCRT machinery (Endosomal Sorting Complex Required for Transport) or ESCRT-associated proteins. F13 contains one L domain: a YPPL motif, which might interact with PDCD6IP/AIP1.</text>
</comment>
<comment type="PTM">
    <text evidence="1">Palmitoylated. Attachment of the palmitate moiety is essential for correct intracellular targeting and protein function.</text>
</comment>
<comment type="miscellaneous">
    <text>The mutation in position 280 confers resistance to an inhibitor of virus envelopment and release.</text>
</comment>
<comment type="similarity">
    <text evidence="4">Belongs to the orthopoxvirus OPG057 family.</text>
</comment>
<gene>
    <name type="primary">OPG057</name>
    <name type="ORF">F13L</name>
</gene>